<protein>
    <recommendedName>
        <fullName evidence="4">Uncharacterized protein CXorf58</fullName>
    </recommendedName>
</protein>
<organism>
    <name type="scientific">Homo sapiens</name>
    <name type="common">Human</name>
    <dbReference type="NCBI Taxonomy" id="9606"/>
    <lineage>
        <taxon>Eukaryota</taxon>
        <taxon>Metazoa</taxon>
        <taxon>Chordata</taxon>
        <taxon>Craniata</taxon>
        <taxon>Vertebrata</taxon>
        <taxon>Euteleostomi</taxon>
        <taxon>Mammalia</taxon>
        <taxon>Eutheria</taxon>
        <taxon>Euarchontoglires</taxon>
        <taxon>Primates</taxon>
        <taxon>Haplorrhini</taxon>
        <taxon>Catarrhini</taxon>
        <taxon>Hominidae</taxon>
        <taxon>Homo</taxon>
    </lineage>
</organism>
<evidence type="ECO:0000256" key="1">
    <source>
        <dbReference type="SAM" id="MobiDB-lite"/>
    </source>
</evidence>
<evidence type="ECO:0000269" key="2">
    <source>
    </source>
</evidence>
<evidence type="ECO:0000269" key="3">
    <source>
    </source>
</evidence>
<evidence type="ECO:0000305" key="4"/>
<evidence type="ECO:0000312" key="5">
    <source>
        <dbReference type="HGNC" id="HGNC:26356"/>
    </source>
</evidence>
<sequence length="332" mass="38899">MNRSSNVPRKGILKSGTRSLQKVRRVHFANARNARSLLSMLKDISAQIIQRAWLSHTNKMIFRLLKHAICAAEFYVTHEILKKVAPLEAKLIKDPTMQCKIRFRFRGETFPPFIVFKIFLHTDGHGYKYFSGKNVLMPSSKAVDDACKLMGERKFHRIIMEDERIFPKSKVTDIMDVVTMQDYVQYRSFFDEAPAFSGGRNNSWRKLNLENIPRTMLMYDIVHYSESGVISNRLRNEMKFLLQRPVTQEIHKHQLRIVSEIRGPYLTVQPLYRPYKQQNQVKFLGRRSKQAQMKVEKMRKVYLAKEKNTSEVTEPKTGPSGTKDNYHLHSIF</sequence>
<accession>Q96LI9</accession>
<feature type="chain" id="PRO_0000271066" description="Uncharacterized protein CXorf58">
    <location>
        <begin position="1"/>
        <end position="332"/>
    </location>
</feature>
<feature type="region of interest" description="Disordered" evidence="1">
    <location>
        <begin position="306"/>
        <end position="332"/>
    </location>
</feature>
<feature type="sequence variant" id="VAR_029857" description="In dbSNP:rs2707164." evidence="2 3">
    <original>R</original>
    <variation>C</variation>
    <location>
        <position position="24"/>
    </location>
</feature>
<feature type="sequence variant" id="VAR_029858" description="In dbSNP:rs16982852.">
    <original>R</original>
    <variation>H</variation>
    <location>
        <position position="187"/>
    </location>
</feature>
<reference key="1">
    <citation type="journal article" date="2004" name="Nat. Genet.">
        <title>Complete sequencing and characterization of 21,243 full-length human cDNAs.</title>
        <authorList>
            <person name="Ota T."/>
            <person name="Suzuki Y."/>
            <person name="Nishikawa T."/>
            <person name="Otsuki T."/>
            <person name="Sugiyama T."/>
            <person name="Irie R."/>
            <person name="Wakamatsu A."/>
            <person name="Hayashi K."/>
            <person name="Sato H."/>
            <person name="Nagai K."/>
            <person name="Kimura K."/>
            <person name="Makita H."/>
            <person name="Sekine M."/>
            <person name="Obayashi M."/>
            <person name="Nishi T."/>
            <person name="Shibahara T."/>
            <person name="Tanaka T."/>
            <person name="Ishii S."/>
            <person name="Yamamoto J."/>
            <person name="Saito K."/>
            <person name="Kawai Y."/>
            <person name="Isono Y."/>
            <person name="Nakamura Y."/>
            <person name="Nagahari K."/>
            <person name="Murakami K."/>
            <person name="Yasuda T."/>
            <person name="Iwayanagi T."/>
            <person name="Wagatsuma M."/>
            <person name="Shiratori A."/>
            <person name="Sudo H."/>
            <person name="Hosoiri T."/>
            <person name="Kaku Y."/>
            <person name="Kodaira H."/>
            <person name="Kondo H."/>
            <person name="Sugawara M."/>
            <person name="Takahashi M."/>
            <person name="Kanda K."/>
            <person name="Yokoi T."/>
            <person name="Furuya T."/>
            <person name="Kikkawa E."/>
            <person name="Omura Y."/>
            <person name="Abe K."/>
            <person name="Kamihara K."/>
            <person name="Katsuta N."/>
            <person name="Sato K."/>
            <person name="Tanikawa M."/>
            <person name="Yamazaki M."/>
            <person name="Ninomiya K."/>
            <person name="Ishibashi T."/>
            <person name="Yamashita H."/>
            <person name="Murakawa K."/>
            <person name="Fujimori K."/>
            <person name="Tanai H."/>
            <person name="Kimata M."/>
            <person name="Watanabe M."/>
            <person name="Hiraoka S."/>
            <person name="Chiba Y."/>
            <person name="Ishida S."/>
            <person name="Ono Y."/>
            <person name="Takiguchi S."/>
            <person name="Watanabe S."/>
            <person name="Yosida M."/>
            <person name="Hotuta T."/>
            <person name="Kusano J."/>
            <person name="Kanehori K."/>
            <person name="Takahashi-Fujii A."/>
            <person name="Hara H."/>
            <person name="Tanase T.-O."/>
            <person name="Nomura Y."/>
            <person name="Togiya S."/>
            <person name="Komai F."/>
            <person name="Hara R."/>
            <person name="Takeuchi K."/>
            <person name="Arita M."/>
            <person name="Imose N."/>
            <person name="Musashino K."/>
            <person name="Yuuki H."/>
            <person name="Oshima A."/>
            <person name="Sasaki N."/>
            <person name="Aotsuka S."/>
            <person name="Yoshikawa Y."/>
            <person name="Matsunawa H."/>
            <person name="Ichihara T."/>
            <person name="Shiohata N."/>
            <person name="Sano S."/>
            <person name="Moriya S."/>
            <person name="Momiyama H."/>
            <person name="Satoh N."/>
            <person name="Takami S."/>
            <person name="Terashima Y."/>
            <person name="Suzuki O."/>
            <person name="Nakagawa S."/>
            <person name="Senoh A."/>
            <person name="Mizoguchi H."/>
            <person name="Goto Y."/>
            <person name="Shimizu F."/>
            <person name="Wakebe H."/>
            <person name="Hishigaki H."/>
            <person name="Watanabe T."/>
            <person name="Sugiyama A."/>
            <person name="Takemoto M."/>
            <person name="Kawakami B."/>
            <person name="Yamazaki M."/>
            <person name="Watanabe K."/>
            <person name="Kumagai A."/>
            <person name="Itakura S."/>
            <person name="Fukuzumi Y."/>
            <person name="Fujimori Y."/>
            <person name="Komiyama M."/>
            <person name="Tashiro H."/>
            <person name="Tanigami A."/>
            <person name="Fujiwara T."/>
            <person name="Ono T."/>
            <person name="Yamada K."/>
            <person name="Fujii Y."/>
            <person name="Ozaki K."/>
            <person name="Hirao M."/>
            <person name="Ohmori Y."/>
            <person name="Kawabata A."/>
            <person name="Hikiji T."/>
            <person name="Kobatake N."/>
            <person name="Inagaki H."/>
            <person name="Ikema Y."/>
            <person name="Okamoto S."/>
            <person name="Okitani R."/>
            <person name="Kawakami T."/>
            <person name="Noguchi S."/>
            <person name="Itoh T."/>
            <person name="Shigeta K."/>
            <person name="Senba T."/>
            <person name="Matsumura K."/>
            <person name="Nakajima Y."/>
            <person name="Mizuno T."/>
            <person name="Morinaga M."/>
            <person name="Sasaki M."/>
            <person name="Togashi T."/>
            <person name="Oyama M."/>
            <person name="Hata H."/>
            <person name="Watanabe M."/>
            <person name="Komatsu T."/>
            <person name="Mizushima-Sugano J."/>
            <person name="Satoh T."/>
            <person name="Shirai Y."/>
            <person name="Takahashi Y."/>
            <person name="Nakagawa K."/>
            <person name="Okumura K."/>
            <person name="Nagase T."/>
            <person name="Nomura N."/>
            <person name="Kikuchi H."/>
            <person name="Masuho Y."/>
            <person name="Yamashita R."/>
            <person name="Nakai K."/>
            <person name="Yada T."/>
            <person name="Nakamura Y."/>
            <person name="Ohara O."/>
            <person name="Isogai T."/>
            <person name="Sugano S."/>
        </authorList>
    </citation>
    <scope>NUCLEOTIDE SEQUENCE [LARGE SCALE MRNA]</scope>
    <scope>VARIANT CYS-24</scope>
    <source>
        <tissue>Testis</tissue>
    </source>
</reference>
<reference key="2">
    <citation type="journal article" date="2005" name="Nature">
        <title>The DNA sequence of the human X chromosome.</title>
        <authorList>
            <person name="Ross M.T."/>
            <person name="Grafham D.V."/>
            <person name="Coffey A.J."/>
            <person name="Scherer S."/>
            <person name="McLay K."/>
            <person name="Muzny D."/>
            <person name="Platzer M."/>
            <person name="Howell G.R."/>
            <person name="Burrows C."/>
            <person name="Bird C.P."/>
            <person name="Frankish A."/>
            <person name="Lovell F.L."/>
            <person name="Howe K.L."/>
            <person name="Ashurst J.L."/>
            <person name="Fulton R.S."/>
            <person name="Sudbrak R."/>
            <person name="Wen G."/>
            <person name="Jones M.C."/>
            <person name="Hurles M.E."/>
            <person name="Andrews T.D."/>
            <person name="Scott C.E."/>
            <person name="Searle S."/>
            <person name="Ramser J."/>
            <person name="Whittaker A."/>
            <person name="Deadman R."/>
            <person name="Carter N.P."/>
            <person name="Hunt S.E."/>
            <person name="Chen R."/>
            <person name="Cree A."/>
            <person name="Gunaratne P."/>
            <person name="Havlak P."/>
            <person name="Hodgson A."/>
            <person name="Metzker M.L."/>
            <person name="Richards S."/>
            <person name="Scott G."/>
            <person name="Steffen D."/>
            <person name="Sodergren E."/>
            <person name="Wheeler D.A."/>
            <person name="Worley K.C."/>
            <person name="Ainscough R."/>
            <person name="Ambrose K.D."/>
            <person name="Ansari-Lari M.A."/>
            <person name="Aradhya S."/>
            <person name="Ashwell R.I."/>
            <person name="Babbage A.K."/>
            <person name="Bagguley C.L."/>
            <person name="Ballabio A."/>
            <person name="Banerjee R."/>
            <person name="Barker G.E."/>
            <person name="Barlow K.F."/>
            <person name="Barrett I.P."/>
            <person name="Bates K.N."/>
            <person name="Beare D.M."/>
            <person name="Beasley H."/>
            <person name="Beasley O."/>
            <person name="Beck A."/>
            <person name="Bethel G."/>
            <person name="Blechschmidt K."/>
            <person name="Brady N."/>
            <person name="Bray-Allen S."/>
            <person name="Bridgeman A.M."/>
            <person name="Brown A.J."/>
            <person name="Brown M.J."/>
            <person name="Bonnin D."/>
            <person name="Bruford E.A."/>
            <person name="Buhay C."/>
            <person name="Burch P."/>
            <person name="Burford D."/>
            <person name="Burgess J."/>
            <person name="Burrill W."/>
            <person name="Burton J."/>
            <person name="Bye J.M."/>
            <person name="Carder C."/>
            <person name="Carrel L."/>
            <person name="Chako J."/>
            <person name="Chapman J.C."/>
            <person name="Chavez D."/>
            <person name="Chen E."/>
            <person name="Chen G."/>
            <person name="Chen Y."/>
            <person name="Chen Z."/>
            <person name="Chinault C."/>
            <person name="Ciccodicola A."/>
            <person name="Clark S.Y."/>
            <person name="Clarke G."/>
            <person name="Clee C.M."/>
            <person name="Clegg S."/>
            <person name="Clerc-Blankenburg K."/>
            <person name="Clifford K."/>
            <person name="Cobley V."/>
            <person name="Cole C.G."/>
            <person name="Conquer J.S."/>
            <person name="Corby N."/>
            <person name="Connor R.E."/>
            <person name="David R."/>
            <person name="Davies J."/>
            <person name="Davis C."/>
            <person name="Davis J."/>
            <person name="Delgado O."/>
            <person name="Deshazo D."/>
            <person name="Dhami P."/>
            <person name="Ding Y."/>
            <person name="Dinh H."/>
            <person name="Dodsworth S."/>
            <person name="Draper H."/>
            <person name="Dugan-Rocha S."/>
            <person name="Dunham A."/>
            <person name="Dunn M."/>
            <person name="Durbin K.J."/>
            <person name="Dutta I."/>
            <person name="Eades T."/>
            <person name="Ellwood M."/>
            <person name="Emery-Cohen A."/>
            <person name="Errington H."/>
            <person name="Evans K.L."/>
            <person name="Faulkner L."/>
            <person name="Francis F."/>
            <person name="Frankland J."/>
            <person name="Fraser A.E."/>
            <person name="Galgoczy P."/>
            <person name="Gilbert J."/>
            <person name="Gill R."/>
            <person name="Gloeckner G."/>
            <person name="Gregory S.G."/>
            <person name="Gribble S."/>
            <person name="Griffiths C."/>
            <person name="Grocock R."/>
            <person name="Gu Y."/>
            <person name="Gwilliam R."/>
            <person name="Hamilton C."/>
            <person name="Hart E.A."/>
            <person name="Hawes A."/>
            <person name="Heath P.D."/>
            <person name="Heitmann K."/>
            <person name="Hennig S."/>
            <person name="Hernandez J."/>
            <person name="Hinzmann B."/>
            <person name="Ho S."/>
            <person name="Hoffs M."/>
            <person name="Howden P.J."/>
            <person name="Huckle E.J."/>
            <person name="Hume J."/>
            <person name="Hunt P.J."/>
            <person name="Hunt A.R."/>
            <person name="Isherwood J."/>
            <person name="Jacob L."/>
            <person name="Johnson D."/>
            <person name="Jones S."/>
            <person name="de Jong P.J."/>
            <person name="Joseph S.S."/>
            <person name="Keenan S."/>
            <person name="Kelly S."/>
            <person name="Kershaw J.K."/>
            <person name="Khan Z."/>
            <person name="Kioschis P."/>
            <person name="Klages S."/>
            <person name="Knights A.J."/>
            <person name="Kosiura A."/>
            <person name="Kovar-Smith C."/>
            <person name="Laird G.K."/>
            <person name="Langford C."/>
            <person name="Lawlor S."/>
            <person name="Leversha M."/>
            <person name="Lewis L."/>
            <person name="Liu W."/>
            <person name="Lloyd C."/>
            <person name="Lloyd D.M."/>
            <person name="Loulseged H."/>
            <person name="Loveland J.E."/>
            <person name="Lovell J.D."/>
            <person name="Lozado R."/>
            <person name="Lu J."/>
            <person name="Lyne R."/>
            <person name="Ma J."/>
            <person name="Maheshwari M."/>
            <person name="Matthews L.H."/>
            <person name="McDowall J."/>
            <person name="McLaren S."/>
            <person name="McMurray A."/>
            <person name="Meidl P."/>
            <person name="Meitinger T."/>
            <person name="Milne S."/>
            <person name="Miner G."/>
            <person name="Mistry S.L."/>
            <person name="Morgan M."/>
            <person name="Morris S."/>
            <person name="Mueller I."/>
            <person name="Mullikin J.C."/>
            <person name="Nguyen N."/>
            <person name="Nordsiek G."/>
            <person name="Nyakatura G."/>
            <person name="O'dell C.N."/>
            <person name="Okwuonu G."/>
            <person name="Palmer S."/>
            <person name="Pandian R."/>
            <person name="Parker D."/>
            <person name="Parrish J."/>
            <person name="Pasternak S."/>
            <person name="Patel D."/>
            <person name="Pearce A.V."/>
            <person name="Pearson D.M."/>
            <person name="Pelan S.E."/>
            <person name="Perez L."/>
            <person name="Porter K.M."/>
            <person name="Ramsey Y."/>
            <person name="Reichwald K."/>
            <person name="Rhodes S."/>
            <person name="Ridler K.A."/>
            <person name="Schlessinger D."/>
            <person name="Schueler M.G."/>
            <person name="Sehra H.K."/>
            <person name="Shaw-Smith C."/>
            <person name="Shen H."/>
            <person name="Sheridan E.M."/>
            <person name="Shownkeen R."/>
            <person name="Skuce C.D."/>
            <person name="Smith M.L."/>
            <person name="Sotheran E.C."/>
            <person name="Steingruber H.E."/>
            <person name="Steward C.A."/>
            <person name="Storey R."/>
            <person name="Swann R.M."/>
            <person name="Swarbreck D."/>
            <person name="Tabor P.E."/>
            <person name="Taudien S."/>
            <person name="Taylor T."/>
            <person name="Teague B."/>
            <person name="Thomas K."/>
            <person name="Thorpe A."/>
            <person name="Timms K."/>
            <person name="Tracey A."/>
            <person name="Trevanion S."/>
            <person name="Tromans A.C."/>
            <person name="d'Urso M."/>
            <person name="Verduzco D."/>
            <person name="Villasana D."/>
            <person name="Waldron L."/>
            <person name="Wall M."/>
            <person name="Wang Q."/>
            <person name="Warren J."/>
            <person name="Warry G.L."/>
            <person name="Wei X."/>
            <person name="West A."/>
            <person name="Whitehead S.L."/>
            <person name="Whiteley M.N."/>
            <person name="Wilkinson J.E."/>
            <person name="Willey D.L."/>
            <person name="Williams G."/>
            <person name="Williams L."/>
            <person name="Williamson A."/>
            <person name="Williamson H."/>
            <person name="Wilming L."/>
            <person name="Woodmansey R.L."/>
            <person name="Wray P.W."/>
            <person name="Yen J."/>
            <person name="Zhang J."/>
            <person name="Zhou J."/>
            <person name="Zoghbi H."/>
            <person name="Zorilla S."/>
            <person name="Buck D."/>
            <person name="Reinhardt R."/>
            <person name="Poustka A."/>
            <person name="Rosenthal A."/>
            <person name="Lehrach H."/>
            <person name="Meindl A."/>
            <person name="Minx P.J."/>
            <person name="Hillier L.W."/>
            <person name="Willard H.F."/>
            <person name="Wilson R.K."/>
            <person name="Waterston R.H."/>
            <person name="Rice C.M."/>
            <person name="Vaudin M."/>
            <person name="Coulson A."/>
            <person name="Nelson D.L."/>
            <person name="Weinstock G."/>
            <person name="Sulston J.E."/>
            <person name="Durbin R.M."/>
            <person name="Hubbard T."/>
            <person name="Gibbs R.A."/>
            <person name="Beck S."/>
            <person name="Rogers J."/>
            <person name="Bentley D.R."/>
        </authorList>
    </citation>
    <scope>NUCLEOTIDE SEQUENCE [LARGE SCALE GENOMIC DNA]</scope>
</reference>
<reference key="3">
    <citation type="journal article" date="2004" name="Genome Res.">
        <title>The status, quality, and expansion of the NIH full-length cDNA project: the Mammalian Gene Collection (MGC).</title>
        <authorList>
            <consortium name="The MGC Project Team"/>
        </authorList>
    </citation>
    <scope>NUCLEOTIDE SEQUENCE [LARGE SCALE MRNA]</scope>
    <scope>VARIANT CYS-24</scope>
    <source>
        <tissue>Testis</tissue>
    </source>
</reference>
<keyword id="KW-1267">Proteomics identification</keyword>
<keyword id="KW-1185">Reference proteome</keyword>
<comment type="interaction">
    <interactant intactId="EBI-20870433">
        <id>Q96LI9</id>
    </interactant>
    <interactant intactId="EBI-2833330">
        <id>Q9NZC3</id>
        <label>GDE1</label>
    </interactant>
    <organismsDiffer>false</organismsDiffer>
    <experiments>2</experiments>
</comment>
<name>CX058_HUMAN</name>
<dbReference type="EMBL" id="AK058173">
    <property type="protein sequence ID" value="BAB71702.1"/>
    <property type="molecule type" value="mRNA"/>
</dbReference>
<dbReference type="EMBL" id="AC079376">
    <property type="status" value="NOT_ANNOTATED_CDS"/>
    <property type="molecule type" value="Genomic_DNA"/>
</dbReference>
<dbReference type="EMBL" id="BC117344">
    <property type="protein sequence ID" value="AAI17345.1"/>
    <property type="molecule type" value="mRNA"/>
</dbReference>
<dbReference type="EMBL" id="BC117346">
    <property type="protein sequence ID" value="AAI17347.1"/>
    <property type="molecule type" value="mRNA"/>
</dbReference>
<dbReference type="CCDS" id="CCDS14209.1"/>
<dbReference type="RefSeq" id="NP_001163045.1">
    <property type="nucleotide sequence ID" value="NM_001169574.1"/>
</dbReference>
<dbReference type="RefSeq" id="NP_689974.2">
    <property type="nucleotide sequence ID" value="NM_152761.3"/>
</dbReference>
<dbReference type="RefSeq" id="XP_011543775.1">
    <property type="nucleotide sequence ID" value="XM_011545473.3"/>
</dbReference>
<dbReference type="BioGRID" id="129018">
    <property type="interactions" value="6"/>
</dbReference>
<dbReference type="FunCoup" id="Q96LI9">
    <property type="interactions" value="10"/>
</dbReference>
<dbReference type="IntAct" id="Q96LI9">
    <property type="interactions" value="5"/>
</dbReference>
<dbReference type="STRING" id="9606.ENSP00000368511"/>
<dbReference type="GlyGen" id="Q96LI9">
    <property type="glycosylation" value="2 sites, 1 O-linked glycan (2 sites)"/>
</dbReference>
<dbReference type="iPTMnet" id="Q96LI9"/>
<dbReference type="PhosphoSitePlus" id="Q96LI9"/>
<dbReference type="BioMuta" id="CXorf58"/>
<dbReference type="DMDM" id="134047748"/>
<dbReference type="MassIVE" id="Q96LI9"/>
<dbReference type="PaxDb" id="9606-ENSP00000368511"/>
<dbReference type="PeptideAtlas" id="Q96LI9"/>
<dbReference type="ProteomicsDB" id="77213"/>
<dbReference type="Antibodypedia" id="24554">
    <property type="antibodies" value="43 antibodies from 11 providers"/>
</dbReference>
<dbReference type="DNASU" id="254158"/>
<dbReference type="Ensembl" id="ENST00000379211.8">
    <property type="protein sequence ID" value="ENSP00000368511.3"/>
    <property type="gene ID" value="ENSG00000165182.12"/>
</dbReference>
<dbReference type="GeneID" id="254158"/>
<dbReference type="KEGG" id="hsa:254158"/>
<dbReference type="MANE-Select" id="ENST00000379211.8">
    <property type="protein sequence ID" value="ENSP00000368511.3"/>
    <property type="RefSeq nucleotide sequence ID" value="NM_152761.3"/>
    <property type="RefSeq protein sequence ID" value="NP_689974.2"/>
</dbReference>
<dbReference type="UCSC" id="uc004daz.2">
    <property type="organism name" value="human"/>
</dbReference>
<dbReference type="AGR" id="HGNC:26356"/>
<dbReference type="CTD" id="254158"/>
<dbReference type="DisGeNET" id="254158"/>
<dbReference type="GeneCards" id="CXorf58"/>
<dbReference type="HGNC" id="HGNC:26356">
    <property type="gene designation" value="CXorf58"/>
</dbReference>
<dbReference type="HPA" id="ENSG00000165182">
    <property type="expression patterns" value="Tissue enriched (testis)"/>
</dbReference>
<dbReference type="neXtProt" id="NX_Q96LI9"/>
<dbReference type="OpenTargets" id="ENSG00000165182"/>
<dbReference type="PharmGKB" id="PA145149060"/>
<dbReference type="VEuPathDB" id="HostDB:ENSG00000165182"/>
<dbReference type="eggNOG" id="ENOG502QUVK">
    <property type="taxonomic scope" value="Eukaryota"/>
</dbReference>
<dbReference type="GeneTree" id="ENSGT00510000048637"/>
<dbReference type="HOGENOM" id="CLU_065443_1_0_1"/>
<dbReference type="InParanoid" id="Q96LI9"/>
<dbReference type="OrthoDB" id="10006090at2759"/>
<dbReference type="PAN-GO" id="Q96LI9">
    <property type="GO annotations" value="0 GO annotations based on evolutionary models"/>
</dbReference>
<dbReference type="PhylomeDB" id="Q96LI9"/>
<dbReference type="TreeFam" id="TF328500"/>
<dbReference type="PathwayCommons" id="Q96LI9"/>
<dbReference type="SignaLink" id="Q96LI9"/>
<dbReference type="BioGRID-ORCS" id="254158">
    <property type="hits" value="21 hits in 764 CRISPR screens"/>
</dbReference>
<dbReference type="ChiTaRS" id="CXorf58">
    <property type="organism name" value="human"/>
</dbReference>
<dbReference type="GenomeRNAi" id="254158"/>
<dbReference type="Pharos" id="Q96LI9">
    <property type="development level" value="Tdark"/>
</dbReference>
<dbReference type="PRO" id="PR:Q96LI9"/>
<dbReference type="Proteomes" id="UP000005640">
    <property type="component" value="Chromosome X"/>
</dbReference>
<dbReference type="RNAct" id="Q96LI9">
    <property type="molecule type" value="protein"/>
</dbReference>
<dbReference type="Bgee" id="ENSG00000165182">
    <property type="expression patterns" value="Expressed in male germ line stem cell (sensu Vertebrata) in testis and 68 other cell types or tissues"/>
</dbReference>
<dbReference type="ExpressionAtlas" id="Q96LI9">
    <property type="expression patterns" value="baseline and differential"/>
</dbReference>
<dbReference type="PANTHER" id="PTHR33504:SF1">
    <property type="entry name" value="FAMILY WITH SEQUENCE SIMILARITY 90, MEMBER A1B"/>
    <property type="match status" value="1"/>
</dbReference>
<dbReference type="PANTHER" id="PTHR33504">
    <property type="entry name" value="NADH DEHYDROGENASE (UBIQUINONE) 1 BETA SUBCOMPLEX, 4"/>
    <property type="match status" value="1"/>
</dbReference>
<gene>
    <name evidence="5" type="primary">CXorf58</name>
</gene>
<proteinExistence type="evidence at protein level"/>